<accession>Q9PRE2</accession>
<feature type="chain" id="PRO_0000114294" description="Chromosomal replication initiator protein DnaA">
    <location>
        <begin position="1"/>
        <end position="457"/>
    </location>
</feature>
<feature type="region of interest" description="Domain I, interacts with DnaA modulators" evidence="1">
    <location>
        <begin position="1"/>
        <end position="73"/>
    </location>
</feature>
<feature type="region of interest" description="Domain II" evidence="1">
    <location>
        <begin position="73"/>
        <end position="108"/>
    </location>
</feature>
<feature type="region of interest" description="Domain III, AAA+ region" evidence="1">
    <location>
        <begin position="109"/>
        <end position="331"/>
    </location>
</feature>
<feature type="region of interest" description="Domain IV, binds dsDNA" evidence="1">
    <location>
        <begin position="332"/>
        <end position="457"/>
    </location>
</feature>
<feature type="binding site" evidence="1">
    <location>
        <position position="156"/>
    </location>
    <ligand>
        <name>ATP</name>
        <dbReference type="ChEBI" id="CHEBI:30616"/>
    </ligand>
</feature>
<feature type="binding site" evidence="1">
    <location>
        <position position="158"/>
    </location>
    <ligand>
        <name>ATP</name>
        <dbReference type="ChEBI" id="CHEBI:30616"/>
    </ligand>
</feature>
<feature type="binding site" evidence="1">
    <location>
        <position position="159"/>
    </location>
    <ligand>
        <name>ATP</name>
        <dbReference type="ChEBI" id="CHEBI:30616"/>
    </ligand>
</feature>
<feature type="binding site" evidence="1">
    <location>
        <position position="160"/>
    </location>
    <ligand>
        <name>ATP</name>
        <dbReference type="ChEBI" id="CHEBI:30616"/>
    </ligand>
</feature>
<sequence length="457" mass="52655">MANNYQTLYDSAIKRIPYDLISDQAYAILQNAKTHKVCDGVLYIIVANAFEKSIINGNFINIISKYLSEEFKKENIVNFEFIIDNEKLLINSNFLIKETNIKNRFNFSDELLRYNFNNLVISNFNQKAIKAIENLFSNNYDNSSMCNPLFLFGKVGVGKTHIVAAAGNRFANSNPNLKIYYYEGQDFFRKFCSASLKGTSYVEEFKKEIASADLLIFEDIQNIQSRDSTAELFFNIFNDIKLNGGKIILTSDRTPNELNGFHNRIISRLASGLQCKISQPDKNEAIKIINNWFEFKKKYQITDEAKEYIAEGFHTDIRQMIGNLKQICFWADNDTNKDLIITKDYVIECSVENEIPLNIVVKKQFKPEQIIEIVAKELNIKTDLIKSSIRKNNIVWARDIVCYILKNKLNLTLTDIGKLLNGREHTTISHSISKVQKILDDENSQEALQINLIINKF</sequence>
<reference key="1">
    <citation type="journal article" date="2000" name="Nature">
        <title>The complete sequence of the mucosal pathogen Ureaplasma urealyticum.</title>
        <authorList>
            <person name="Glass J.I."/>
            <person name="Lefkowitz E.J."/>
            <person name="Glass J.S."/>
            <person name="Heiner C.R."/>
            <person name="Chen E.Y."/>
            <person name="Cassell G.H."/>
        </authorList>
    </citation>
    <scope>NUCLEOTIDE SEQUENCE [LARGE SCALE GENOMIC DNA]</scope>
    <source>
        <strain>ATCC 700970</strain>
    </source>
</reference>
<protein>
    <recommendedName>
        <fullName evidence="1">Chromosomal replication initiator protein DnaA</fullName>
    </recommendedName>
</protein>
<gene>
    <name evidence="1" type="primary">dnaA</name>
    <name type="ordered locus">UU001</name>
</gene>
<evidence type="ECO:0000255" key="1">
    <source>
        <dbReference type="HAMAP-Rule" id="MF_00377"/>
    </source>
</evidence>
<name>DNAA_UREPA</name>
<organism>
    <name type="scientific">Ureaplasma parvum serovar 3 (strain ATCC 700970)</name>
    <dbReference type="NCBI Taxonomy" id="273119"/>
    <lineage>
        <taxon>Bacteria</taxon>
        <taxon>Bacillati</taxon>
        <taxon>Mycoplasmatota</taxon>
        <taxon>Mycoplasmoidales</taxon>
        <taxon>Mycoplasmoidaceae</taxon>
        <taxon>Ureaplasma</taxon>
    </lineage>
</organism>
<dbReference type="EMBL" id="AF222894">
    <property type="protein sequence ID" value="AAF30408.1"/>
    <property type="molecule type" value="Genomic_DNA"/>
</dbReference>
<dbReference type="RefSeq" id="WP_006688755.1">
    <property type="nucleotide sequence ID" value="NC_002162.1"/>
</dbReference>
<dbReference type="SMR" id="Q9PRE2"/>
<dbReference type="STRING" id="273119.UU001"/>
<dbReference type="EnsemblBacteria" id="AAF30408">
    <property type="protein sequence ID" value="AAF30408"/>
    <property type="gene ID" value="UU001"/>
</dbReference>
<dbReference type="GeneID" id="29672652"/>
<dbReference type="KEGG" id="uur:UU001"/>
<dbReference type="eggNOG" id="COG0593">
    <property type="taxonomic scope" value="Bacteria"/>
</dbReference>
<dbReference type="HOGENOM" id="CLU_026910_3_2_14"/>
<dbReference type="OrthoDB" id="9807019at2"/>
<dbReference type="Proteomes" id="UP000000423">
    <property type="component" value="Chromosome"/>
</dbReference>
<dbReference type="GO" id="GO:0005737">
    <property type="term" value="C:cytoplasm"/>
    <property type="evidence" value="ECO:0007669"/>
    <property type="project" value="UniProtKB-SubCell"/>
</dbReference>
<dbReference type="GO" id="GO:0005886">
    <property type="term" value="C:plasma membrane"/>
    <property type="evidence" value="ECO:0007669"/>
    <property type="project" value="TreeGrafter"/>
</dbReference>
<dbReference type="GO" id="GO:0005524">
    <property type="term" value="F:ATP binding"/>
    <property type="evidence" value="ECO:0007669"/>
    <property type="project" value="UniProtKB-UniRule"/>
</dbReference>
<dbReference type="GO" id="GO:0003688">
    <property type="term" value="F:DNA replication origin binding"/>
    <property type="evidence" value="ECO:0007669"/>
    <property type="project" value="UniProtKB-UniRule"/>
</dbReference>
<dbReference type="GO" id="GO:0008289">
    <property type="term" value="F:lipid binding"/>
    <property type="evidence" value="ECO:0007669"/>
    <property type="project" value="UniProtKB-KW"/>
</dbReference>
<dbReference type="GO" id="GO:0006270">
    <property type="term" value="P:DNA replication initiation"/>
    <property type="evidence" value="ECO:0007669"/>
    <property type="project" value="UniProtKB-UniRule"/>
</dbReference>
<dbReference type="GO" id="GO:0006275">
    <property type="term" value="P:regulation of DNA replication"/>
    <property type="evidence" value="ECO:0007669"/>
    <property type="project" value="UniProtKB-UniRule"/>
</dbReference>
<dbReference type="CDD" id="cd00009">
    <property type="entry name" value="AAA"/>
    <property type="match status" value="1"/>
</dbReference>
<dbReference type="CDD" id="cd06571">
    <property type="entry name" value="Bac_DnaA_C"/>
    <property type="match status" value="1"/>
</dbReference>
<dbReference type="Gene3D" id="1.10.1750.10">
    <property type="match status" value="1"/>
</dbReference>
<dbReference type="Gene3D" id="1.10.8.60">
    <property type="match status" value="1"/>
</dbReference>
<dbReference type="Gene3D" id="3.40.50.300">
    <property type="entry name" value="P-loop containing nucleotide triphosphate hydrolases"/>
    <property type="match status" value="1"/>
</dbReference>
<dbReference type="HAMAP" id="MF_00377">
    <property type="entry name" value="DnaA_bact"/>
    <property type="match status" value="1"/>
</dbReference>
<dbReference type="InterPro" id="IPR001957">
    <property type="entry name" value="Chromosome_initiator_DnaA"/>
</dbReference>
<dbReference type="InterPro" id="IPR020591">
    <property type="entry name" value="Chromosome_initiator_DnaA-like"/>
</dbReference>
<dbReference type="InterPro" id="IPR018312">
    <property type="entry name" value="Chromosome_initiator_DnaA_CS"/>
</dbReference>
<dbReference type="InterPro" id="IPR013159">
    <property type="entry name" value="DnaA_C"/>
</dbReference>
<dbReference type="InterPro" id="IPR013317">
    <property type="entry name" value="DnaA_dom"/>
</dbReference>
<dbReference type="InterPro" id="IPR027417">
    <property type="entry name" value="P-loop_NTPase"/>
</dbReference>
<dbReference type="InterPro" id="IPR010921">
    <property type="entry name" value="Trp_repressor/repl_initiator"/>
</dbReference>
<dbReference type="NCBIfam" id="TIGR00362">
    <property type="entry name" value="DnaA"/>
    <property type="match status" value="1"/>
</dbReference>
<dbReference type="PANTHER" id="PTHR30050">
    <property type="entry name" value="CHROMOSOMAL REPLICATION INITIATOR PROTEIN DNAA"/>
    <property type="match status" value="1"/>
</dbReference>
<dbReference type="PANTHER" id="PTHR30050:SF2">
    <property type="entry name" value="CHROMOSOMAL REPLICATION INITIATOR PROTEIN DNAA"/>
    <property type="match status" value="1"/>
</dbReference>
<dbReference type="Pfam" id="PF00308">
    <property type="entry name" value="Bac_DnaA"/>
    <property type="match status" value="1"/>
</dbReference>
<dbReference type="Pfam" id="PF08299">
    <property type="entry name" value="Bac_DnaA_C"/>
    <property type="match status" value="1"/>
</dbReference>
<dbReference type="PRINTS" id="PR00051">
    <property type="entry name" value="DNAA"/>
</dbReference>
<dbReference type="SMART" id="SM00760">
    <property type="entry name" value="Bac_DnaA_C"/>
    <property type="match status" value="1"/>
</dbReference>
<dbReference type="SUPFAM" id="SSF52540">
    <property type="entry name" value="P-loop containing nucleoside triphosphate hydrolases"/>
    <property type="match status" value="1"/>
</dbReference>
<dbReference type="SUPFAM" id="SSF48295">
    <property type="entry name" value="TrpR-like"/>
    <property type="match status" value="1"/>
</dbReference>
<dbReference type="PROSITE" id="PS01008">
    <property type="entry name" value="DNAA"/>
    <property type="match status" value="1"/>
</dbReference>
<proteinExistence type="inferred from homology"/>
<keyword id="KW-0067">ATP-binding</keyword>
<keyword id="KW-0963">Cytoplasm</keyword>
<keyword id="KW-0235">DNA replication</keyword>
<keyword id="KW-0238">DNA-binding</keyword>
<keyword id="KW-0446">Lipid-binding</keyword>
<keyword id="KW-0547">Nucleotide-binding</keyword>
<keyword id="KW-1185">Reference proteome</keyword>
<comment type="function">
    <text evidence="1">Plays an essential role in the initiation and regulation of chromosomal replication. ATP-DnaA binds to the origin of replication (oriC) to initiate formation of the DNA replication initiation complex once per cell cycle. Binds the DnaA box (a 9 base pair repeat at the origin) and separates the double-stranded (ds)DNA. Forms a right-handed helical filament on oriC DNA; dsDNA binds to the exterior of the filament while single-stranded (ss)DNA is stabiized in the filament's interior. The ATP-DnaA-oriC complex binds and stabilizes one strand of the AT-rich DNA unwinding element (DUE), permitting loading of DNA polymerase. After initiation quickly degrades to an ADP-DnaA complex that is not apt for DNA replication. Binds acidic phospholipids.</text>
</comment>
<comment type="subunit">
    <text evidence="1">Oligomerizes as a right-handed, spiral filament on DNA at oriC.</text>
</comment>
<comment type="subcellular location">
    <subcellularLocation>
        <location evidence="1">Cytoplasm</location>
    </subcellularLocation>
</comment>
<comment type="domain">
    <text evidence="1">Domain I is involved in oligomerization and binding regulators, domain II is flexibile and of varying length in different bacteria, domain III forms the AAA+ region, while domain IV binds dsDNA.</text>
</comment>
<comment type="similarity">
    <text evidence="1">Belongs to the DnaA family.</text>
</comment>